<dbReference type="EMBL" id="AE015924">
    <property type="protein sequence ID" value="AAQ66913.1"/>
    <property type="molecule type" value="Genomic_DNA"/>
</dbReference>
<dbReference type="RefSeq" id="WP_004583592.1">
    <property type="nucleotide sequence ID" value="NC_002950.2"/>
</dbReference>
<dbReference type="SMR" id="Q7MTL9"/>
<dbReference type="STRING" id="242619.PG_1932"/>
<dbReference type="EnsemblBacteria" id="AAQ66913">
    <property type="protein sequence ID" value="AAQ66913"/>
    <property type="gene ID" value="PG_1932"/>
</dbReference>
<dbReference type="GeneID" id="29257013"/>
<dbReference type="GeneID" id="57239590"/>
<dbReference type="KEGG" id="pgi:PG_1932"/>
<dbReference type="eggNOG" id="COG0092">
    <property type="taxonomic scope" value="Bacteria"/>
</dbReference>
<dbReference type="HOGENOM" id="CLU_058591_0_2_10"/>
<dbReference type="Proteomes" id="UP000000588">
    <property type="component" value="Chromosome"/>
</dbReference>
<dbReference type="GO" id="GO:0022627">
    <property type="term" value="C:cytosolic small ribosomal subunit"/>
    <property type="evidence" value="ECO:0007669"/>
    <property type="project" value="TreeGrafter"/>
</dbReference>
<dbReference type="GO" id="GO:0003729">
    <property type="term" value="F:mRNA binding"/>
    <property type="evidence" value="ECO:0007669"/>
    <property type="project" value="UniProtKB-UniRule"/>
</dbReference>
<dbReference type="GO" id="GO:0019843">
    <property type="term" value="F:rRNA binding"/>
    <property type="evidence" value="ECO:0007669"/>
    <property type="project" value="UniProtKB-UniRule"/>
</dbReference>
<dbReference type="GO" id="GO:0003735">
    <property type="term" value="F:structural constituent of ribosome"/>
    <property type="evidence" value="ECO:0007669"/>
    <property type="project" value="InterPro"/>
</dbReference>
<dbReference type="GO" id="GO:0006412">
    <property type="term" value="P:translation"/>
    <property type="evidence" value="ECO:0007669"/>
    <property type="project" value="UniProtKB-UniRule"/>
</dbReference>
<dbReference type="CDD" id="cd02412">
    <property type="entry name" value="KH-II_30S_S3"/>
    <property type="match status" value="1"/>
</dbReference>
<dbReference type="FunFam" id="3.30.1140.32:FF:000007">
    <property type="entry name" value="30S ribosomal protein S3"/>
    <property type="match status" value="1"/>
</dbReference>
<dbReference type="FunFam" id="3.30.300.20:FF:000001">
    <property type="entry name" value="30S ribosomal protein S3"/>
    <property type="match status" value="1"/>
</dbReference>
<dbReference type="Gene3D" id="3.30.300.20">
    <property type="match status" value="1"/>
</dbReference>
<dbReference type="Gene3D" id="3.30.1140.32">
    <property type="entry name" value="Ribosomal protein S3, C-terminal domain"/>
    <property type="match status" value="1"/>
</dbReference>
<dbReference type="HAMAP" id="MF_01309_B">
    <property type="entry name" value="Ribosomal_uS3_B"/>
    <property type="match status" value="1"/>
</dbReference>
<dbReference type="InterPro" id="IPR004087">
    <property type="entry name" value="KH_dom"/>
</dbReference>
<dbReference type="InterPro" id="IPR015946">
    <property type="entry name" value="KH_dom-like_a/b"/>
</dbReference>
<dbReference type="InterPro" id="IPR004044">
    <property type="entry name" value="KH_dom_type_2"/>
</dbReference>
<dbReference type="InterPro" id="IPR009019">
    <property type="entry name" value="KH_sf_prok-type"/>
</dbReference>
<dbReference type="InterPro" id="IPR036419">
    <property type="entry name" value="Ribosomal_S3_C_sf"/>
</dbReference>
<dbReference type="InterPro" id="IPR005704">
    <property type="entry name" value="Ribosomal_uS3_bac-typ"/>
</dbReference>
<dbReference type="InterPro" id="IPR001351">
    <property type="entry name" value="Ribosomal_uS3_C"/>
</dbReference>
<dbReference type="InterPro" id="IPR018280">
    <property type="entry name" value="Ribosomal_uS3_CS"/>
</dbReference>
<dbReference type="NCBIfam" id="TIGR01009">
    <property type="entry name" value="rpsC_bact"/>
    <property type="match status" value="1"/>
</dbReference>
<dbReference type="PANTHER" id="PTHR11760">
    <property type="entry name" value="30S/40S RIBOSOMAL PROTEIN S3"/>
    <property type="match status" value="1"/>
</dbReference>
<dbReference type="PANTHER" id="PTHR11760:SF19">
    <property type="entry name" value="SMALL RIBOSOMAL SUBUNIT PROTEIN US3C"/>
    <property type="match status" value="1"/>
</dbReference>
<dbReference type="Pfam" id="PF07650">
    <property type="entry name" value="KH_2"/>
    <property type="match status" value="1"/>
</dbReference>
<dbReference type="Pfam" id="PF00189">
    <property type="entry name" value="Ribosomal_S3_C"/>
    <property type="match status" value="1"/>
</dbReference>
<dbReference type="SMART" id="SM00322">
    <property type="entry name" value="KH"/>
    <property type="match status" value="1"/>
</dbReference>
<dbReference type="SUPFAM" id="SSF54814">
    <property type="entry name" value="Prokaryotic type KH domain (KH-domain type II)"/>
    <property type="match status" value="1"/>
</dbReference>
<dbReference type="SUPFAM" id="SSF54821">
    <property type="entry name" value="Ribosomal protein S3 C-terminal domain"/>
    <property type="match status" value="1"/>
</dbReference>
<dbReference type="PROSITE" id="PS50823">
    <property type="entry name" value="KH_TYPE_2"/>
    <property type="match status" value="1"/>
</dbReference>
<dbReference type="PROSITE" id="PS00548">
    <property type="entry name" value="RIBOSOMAL_S3"/>
    <property type="match status" value="1"/>
</dbReference>
<protein>
    <recommendedName>
        <fullName evidence="1">Small ribosomal subunit protein uS3</fullName>
    </recommendedName>
    <alternativeName>
        <fullName evidence="3">30S ribosomal protein S3</fullName>
    </alternativeName>
</protein>
<keyword id="KW-1185">Reference proteome</keyword>
<keyword id="KW-0687">Ribonucleoprotein</keyword>
<keyword id="KW-0689">Ribosomal protein</keyword>
<keyword id="KW-0694">RNA-binding</keyword>
<keyword id="KW-0699">rRNA-binding</keyword>
<reference key="1">
    <citation type="journal article" date="2003" name="J. Bacteriol.">
        <title>Complete genome sequence of the oral pathogenic bacterium Porphyromonas gingivalis strain W83.</title>
        <authorList>
            <person name="Nelson K.E."/>
            <person name="Fleischmann R.D."/>
            <person name="DeBoy R.T."/>
            <person name="Paulsen I.T."/>
            <person name="Fouts D.E."/>
            <person name="Eisen J.A."/>
            <person name="Daugherty S.C."/>
            <person name="Dodson R.J."/>
            <person name="Durkin A.S."/>
            <person name="Gwinn M.L."/>
            <person name="Haft D.H."/>
            <person name="Kolonay J.F."/>
            <person name="Nelson W.C."/>
            <person name="Mason T.M."/>
            <person name="Tallon L."/>
            <person name="Gray J."/>
            <person name="Granger D."/>
            <person name="Tettelin H."/>
            <person name="Dong H."/>
            <person name="Galvin J.L."/>
            <person name="Duncan M.J."/>
            <person name="Dewhirst F.E."/>
            <person name="Fraser C.M."/>
        </authorList>
    </citation>
    <scope>NUCLEOTIDE SEQUENCE [LARGE SCALE GENOMIC DNA]</scope>
    <source>
        <strain>ATCC BAA-308 / W83</strain>
    </source>
</reference>
<proteinExistence type="inferred from homology"/>
<gene>
    <name evidence="1" type="primary">rpsC</name>
    <name type="ordered locus">PG_1932</name>
</gene>
<accession>Q7MTL9</accession>
<name>RS3_PORGI</name>
<sequence>MGQKINPVSNRLGIIRGWDSNWYGGRKYGETLLEDSRIRQYLNARLAKASVSRIVIERALKLVTITICTARPGMIIGKAGQEVDKLKEELKRITKKDVQINIYEIRKPELDAAIVAENIARQLEGKIAYRRAVKMAIASAMRMGAEGIKIQVSGRLNGAEMARSEMFKEGRTPLHTLRADIDYALAEALTKVGLLGIKVWICKGEVYEKRDLAPNFAVAKNQSRRPNAQGGNNRGGDRNRRRKGNR</sequence>
<comment type="function">
    <text evidence="1">Binds the lower part of the 30S subunit head. Binds mRNA in the 70S ribosome, positioning it for translation.</text>
</comment>
<comment type="subunit">
    <text evidence="1">Part of the 30S ribosomal subunit. Forms a tight complex with proteins S10 and S14.</text>
</comment>
<comment type="similarity">
    <text evidence="1">Belongs to the universal ribosomal protein uS3 family.</text>
</comment>
<organism>
    <name type="scientific">Porphyromonas gingivalis (strain ATCC BAA-308 / W83)</name>
    <dbReference type="NCBI Taxonomy" id="242619"/>
    <lineage>
        <taxon>Bacteria</taxon>
        <taxon>Pseudomonadati</taxon>
        <taxon>Bacteroidota</taxon>
        <taxon>Bacteroidia</taxon>
        <taxon>Bacteroidales</taxon>
        <taxon>Porphyromonadaceae</taxon>
        <taxon>Porphyromonas</taxon>
    </lineage>
</organism>
<evidence type="ECO:0000255" key="1">
    <source>
        <dbReference type="HAMAP-Rule" id="MF_01309"/>
    </source>
</evidence>
<evidence type="ECO:0000256" key="2">
    <source>
        <dbReference type="SAM" id="MobiDB-lite"/>
    </source>
</evidence>
<evidence type="ECO:0000305" key="3"/>
<feature type="chain" id="PRO_0000130173" description="Small ribosomal subunit protein uS3">
    <location>
        <begin position="1"/>
        <end position="246"/>
    </location>
</feature>
<feature type="domain" description="KH type-2" evidence="1">
    <location>
        <begin position="38"/>
        <end position="106"/>
    </location>
</feature>
<feature type="region of interest" description="Disordered" evidence="2">
    <location>
        <begin position="218"/>
        <end position="246"/>
    </location>
</feature>